<accession>Q9TUI7</accession>
<keyword id="KW-0963">Cytoplasm</keyword>
<keyword id="KW-0378">Hydrolase</keyword>
<keyword id="KW-0479">Metal-binding</keyword>
<keyword id="KW-0507">mRNA processing</keyword>
<keyword id="KW-0539">Nucleus</keyword>
<keyword id="KW-1185">Reference proteome</keyword>
<keyword id="KW-0862">Zinc</keyword>
<name>ABEC1_MONDO</name>
<gene>
    <name evidence="8" type="primary">APOBEC1</name>
</gene>
<feature type="chain" id="PRO_0000171744" description="C-&gt;U-editing enzyme APOBEC-1">
    <location>
        <begin position="1"/>
        <end position="235"/>
    </location>
</feature>
<feature type="domain" description="CMP/dCMP-type deaminase" evidence="4">
    <location>
        <begin position="10"/>
        <end position="131"/>
    </location>
</feature>
<feature type="active site" description="Proton donor" evidence="3">
    <location>
        <position position="62"/>
    </location>
</feature>
<feature type="binding site" evidence="3">
    <location>
        <position position="60"/>
    </location>
    <ligand>
        <name>Zn(2+)</name>
        <dbReference type="ChEBI" id="CHEBI:29105"/>
        <note>catalytic</note>
    </ligand>
</feature>
<feature type="binding site" evidence="3">
    <location>
        <position position="92"/>
    </location>
    <ligand>
        <name>Zn(2+)</name>
        <dbReference type="ChEBI" id="CHEBI:29105"/>
        <note>catalytic</note>
    </ligand>
</feature>
<feature type="binding site" evidence="3">
    <location>
        <position position="95"/>
    </location>
    <ligand>
        <name>Zn(2+)</name>
        <dbReference type="ChEBI" id="CHEBI:29105"/>
        <note>catalytic</note>
    </ligand>
</feature>
<evidence type="ECO:0000250" key="1">
    <source>
        <dbReference type="UniProtKB" id="P41238"/>
    </source>
</evidence>
<evidence type="ECO:0000250" key="2">
    <source>
        <dbReference type="UniProtKB" id="P51908"/>
    </source>
</evidence>
<evidence type="ECO:0000250" key="3">
    <source>
        <dbReference type="UniProtKB" id="Q9Y235"/>
    </source>
</evidence>
<evidence type="ECO:0000255" key="4">
    <source>
        <dbReference type="PROSITE-ProRule" id="PRU01083"/>
    </source>
</evidence>
<evidence type="ECO:0000269" key="5">
    <source>
    </source>
</evidence>
<evidence type="ECO:0000303" key="6">
    <source>
    </source>
</evidence>
<evidence type="ECO:0000305" key="7"/>
<evidence type="ECO:0000305" key="8">
    <source>
    </source>
</evidence>
<reference key="1">
    <citation type="journal article" date="1999" name="Nucleic Acids Res.">
        <title>C--&gt;U editing of apolipoprotein B mRNA in marsupials: identification and characterisation of APOBEC-1 from the American opossum Monodelphus domestica.</title>
        <authorList>
            <person name="Fujino T."/>
            <person name="Navaratnam N."/>
            <person name="Jarmuz A."/>
            <person name="von Haeselaer A."/>
            <person name="Scott J."/>
        </authorList>
    </citation>
    <scope>NUCLEOTIDE SEQUENCE [MRNA]</scope>
    <scope>FUNCTION</scope>
    <scope>CATALYTIC ACTIVITY</scope>
</reference>
<organism>
    <name type="scientific">Monodelphis domestica</name>
    <name type="common">Gray short-tailed opossum</name>
    <dbReference type="NCBI Taxonomy" id="13616"/>
    <lineage>
        <taxon>Eukaryota</taxon>
        <taxon>Metazoa</taxon>
        <taxon>Chordata</taxon>
        <taxon>Craniata</taxon>
        <taxon>Vertebrata</taxon>
        <taxon>Euteleostomi</taxon>
        <taxon>Mammalia</taxon>
        <taxon>Metatheria</taxon>
        <taxon>Didelphimorphia</taxon>
        <taxon>Didelphidae</taxon>
        <taxon>Monodelphis</taxon>
    </lineage>
</organism>
<comment type="function">
    <text evidence="1 2 5">Cytidine deaminase catalyzing the cytidine to uridine postranscriptional editing of a variety of mRNAs (PubMed:10373583). Form complexes with cofactors that confer differential editing activity and selectivity. Responsible for the postranscriptional editing of a CAA codon for Gln to a UAA codon for stop in the apolipoprotein B mRNA. Also involved in CGA (Arg) to UGA (Stop) editing in the NF1 mRNA (By similarity). May also play a role in the epigenetic regulation of gene expression by participating in DNA demethylation (By similarity).</text>
</comment>
<comment type="catalytic activity">
    <reaction evidence="1">
        <text>a cytidine in mRNA + H2O + H(+) = a uridine in mRNA + NH4(+)</text>
        <dbReference type="Rhea" id="RHEA:74355"/>
        <dbReference type="Rhea" id="RHEA-COMP:14658"/>
        <dbReference type="Rhea" id="RHEA-COMP:15145"/>
        <dbReference type="ChEBI" id="CHEBI:15377"/>
        <dbReference type="ChEBI" id="CHEBI:15378"/>
        <dbReference type="ChEBI" id="CHEBI:28938"/>
        <dbReference type="ChEBI" id="CHEBI:65315"/>
        <dbReference type="ChEBI" id="CHEBI:82748"/>
    </reaction>
    <physiologicalReaction direction="left-to-right" evidence="1">
        <dbReference type="Rhea" id="RHEA:74356"/>
    </physiologicalReaction>
</comment>
<comment type="catalytic activity">
    <reaction evidence="5">
        <text>cytidine(6666) in apoB mRNA + H2O + H(+) = uridine(6666) in apoB mRNA + NH4(+)</text>
        <dbReference type="Rhea" id="RHEA:21772"/>
        <dbReference type="Rhea" id="RHEA-COMP:13888"/>
        <dbReference type="Rhea" id="RHEA-COMP:13889"/>
        <dbReference type="ChEBI" id="CHEBI:15377"/>
        <dbReference type="ChEBI" id="CHEBI:15378"/>
        <dbReference type="ChEBI" id="CHEBI:28938"/>
        <dbReference type="ChEBI" id="CHEBI:65315"/>
        <dbReference type="ChEBI" id="CHEBI:82748"/>
        <dbReference type="EC" id="3.5.4.36"/>
    </reaction>
    <physiologicalReaction direction="left-to-right" evidence="5">
        <dbReference type="Rhea" id="RHEA:21773"/>
    </physiologicalReaction>
</comment>
<comment type="cofactor">
    <cofactor evidence="3">
        <name>Zn(2+)</name>
        <dbReference type="ChEBI" id="CHEBI:29105"/>
    </cofactor>
    <text evidence="3">Binds 1 Zn(2+) ion per subunit.</text>
</comment>
<comment type="subunit">
    <text evidence="1">Homodimer. Interacts with A1CF; form an mRNA editing complex. Interacts with RBM47; form an mRNA editing complex. Found in a complex with CELF2/CUGBP2 and A1CF. Interacts with HNRPAB. Interacts with SYNCRIP.</text>
</comment>
<comment type="subcellular location">
    <subcellularLocation>
        <location evidence="1">Cytoplasm</location>
    </subcellularLocation>
    <subcellularLocation>
        <location evidence="1">Nucleus</location>
    </subcellularLocation>
</comment>
<comment type="similarity">
    <text evidence="7">Belongs to the cytidine and deoxycytidylate deaminase family.</text>
</comment>
<proteinExistence type="evidence at protein level"/>
<protein>
    <recommendedName>
        <fullName evidence="8">C-&gt;U-editing enzyme APOBEC-1</fullName>
        <ecNumber evidence="5">3.5.4.-</ecNumber>
    </recommendedName>
    <alternativeName>
        <fullName evidence="8">Apolipoprotein B mRNA-editing enzyme catalytic polypeptide 1</fullName>
        <shortName evidence="6">APOBEC-1</shortName>
        <shortName evidence="6">Apolipoprotein B mRNA-editing enzyme 1</shortName>
        <ecNumber evidence="5">3.5.4.36</ecNumber>
    </alternativeName>
    <alternativeName>
        <fullName evidence="8">mRNA(cytosine(6666)) deaminase 1</fullName>
    </alternativeName>
</protein>
<dbReference type="EC" id="3.5.4.-" evidence="5"/>
<dbReference type="EC" id="3.5.4.36" evidence="5"/>
<dbReference type="EMBL" id="AB027195">
    <property type="protein sequence ID" value="BAA86051.1"/>
    <property type="molecule type" value="mRNA"/>
</dbReference>
<dbReference type="RefSeq" id="NP_001028154.1">
    <property type="nucleotide sequence ID" value="NM_001032982.2"/>
</dbReference>
<dbReference type="SMR" id="Q9TUI7"/>
<dbReference type="FunCoup" id="Q9TUI7">
    <property type="interactions" value="9"/>
</dbReference>
<dbReference type="STRING" id="13616.ENSMODP00000022453"/>
<dbReference type="Ensembl" id="ENSMODT00000022843.1">
    <property type="protein sequence ID" value="ENSMODP00000022453.1"/>
    <property type="gene ID" value="ENSMODG00000018004.1"/>
</dbReference>
<dbReference type="GeneID" id="554187"/>
<dbReference type="KEGG" id="mdo:554187"/>
<dbReference type="CTD" id="339"/>
<dbReference type="eggNOG" id="ENOG502SNW2">
    <property type="taxonomic scope" value="Eukaryota"/>
</dbReference>
<dbReference type="GeneTree" id="ENSGT00940000161190"/>
<dbReference type="HOGENOM" id="CLU_080056_3_0_1"/>
<dbReference type="InParanoid" id="Q9TUI7"/>
<dbReference type="OMA" id="LTLQNCH"/>
<dbReference type="OrthoDB" id="5956704at2759"/>
<dbReference type="TreeFam" id="TF331356"/>
<dbReference type="BRENDA" id="3.5.4.36">
    <property type="organism ID" value="7945"/>
</dbReference>
<dbReference type="Proteomes" id="UP000002280">
    <property type="component" value="Chromosome 8"/>
</dbReference>
<dbReference type="Bgee" id="ENSMODG00000018004">
    <property type="expression patterns" value="Expressed in extraembryonic membrane and 4 other cell types or tissues"/>
</dbReference>
<dbReference type="GO" id="GO:0030895">
    <property type="term" value="C:apolipoprotein B mRNA editing enzyme complex"/>
    <property type="evidence" value="ECO:0007669"/>
    <property type="project" value="Ensembl"/>
</dbReference>
<dbReference type="GO" id="GO:0005737">
    <property type="term" value="C:cytoplasm"/>
    <property type="evidence" value="ECO:0000250"/>
    <property type="project" value="UniProtKB"/>
</dbReference>
<dbReference type="GO" id="GO:0005634">
    <property type="term" value="C:nucleus"/>
    <property type="evidence" value="ECO:0000318"/>
    <property type="project" value="GO_Central"/>
</dbReference>
<dbReference type="GO" id="GO:0004126">
    <property type="term" value="F:cytidine deaminase activity"/>
    <property type="evidence" value="ECO:0000318"/>
    <property type="project" value="GO_Central"/>
</dbReference>
<dbReference type="GO" id="GO:0035925">
    <property type="term" value="F:mRNA 3'-UTR AU-rich region binding"/>
    <property type="evidence" value="ECO:0007669"/>
    <property type="project" value="Ensembl"/>
</dbReference>
<dbReference type="GO" id="GO:0003723">
    <property type="term" value="F:RNA binding"/>
    <property type="evidence" value="ECO:0000318"/>
    <property type="project" value="GO_Central"/>
</dbReference>
<dbReference type="GO" id="GO:0008270">
    <property type="term" value="F:zinc ion binding"/>
    <property type="evidence" value="ECO:0007669"/>
    <property type="project" value="InterPro"/>
</dbReference>
<dbReference type="GO" id="GO:0016554">
    <property type="term" value="P:cytidine to uridine editing"/>
    <property type="evidence" value="ECO:0000318"/>
    <property type="project" value="GO_Central"/>
</dbReference>
<dbReference type="GO" id="GO:0051649">
    <property type="term" value="P:establishment of localization in cell"/>
    <property type="evidence" value="ECO:0007669"/>
    <property type="project" value="Ensembl"/>
</dbReference>
<dbReference type="GO" id="GO:0042158">
    <property type="term" value="P:lipoprotein biosynthetic process"/>
    <property type="evidence" value="ECO:0007669"/>
    <property type="project" value="Ensembl"/>
</dbReference>
<dbReference type="GO" id="GO:0042953">
    <property type="term" value="P:lipoprotein transport"/>
    <property type="evidence" value="ECO:0007669"/>
    <property type="project" value="Ensembl"/>
</dbReference>
<dbReference type="GO" id="GO:0016556">
    <property type="term" value="P:mRNA modification"/>
    <property type="evidence" value="ECO:0007669"/>
    <property type="project" value="Ensembl"/>
</dbReference>
<dbReference type="GO" id="GO:0006397">
    <property type="term" value="P:mRNA processing"/>
    <property type="evidence" value="ECO:0007669"/>
    <property type="project" value="UniProtKB-KW"/>
</dbReference>
<dbReference type="GO" id="GO:0048255">
    <property type="term" value="P:mRNA stabilization"/>
    <property type="evidence" value="ECO:0007669"/>
    <property type="project" value="Ensembl"/>
</dbReference>
<dbReference type="GO" id="GO:2000623">
    <property type="term" value="P:negative regulation of nuclear-transcribed mRNA catabolic process, nonsense-mediated decay"/>
    <property type="evidence" value="ECO:0007669"/>
    <property type="project" value="Ensembl"/>
</dbReference>
<dbReference type="GO" id="GO:0090209">
    <property type="term" value="P:negative regulation of triglyceride metabolic process"/>
    <property type="evidence" value="ECO:0007669"/>
    <property type="project" value="Ensembl"/>
</dbReference>
<dbReference type="GO" id="GO:0044029">
    <property type="term" value="P:positive regulation of gene expression via chromosomal CpG island demethylation"/>
    <property type="evidence" value="ECO:0000250"/>
    <property type="project" value="UniProtKB"/>
</dbReference>
<dbReference type="GO" id="GO:0042127">
    <property type="term" value="P:regulation of cell population proliferation"/>
    <property type="evidence" value="ECO:0007669"/>
    <property type="project" value="Ensembl"/>
</dbReference>
<dbReference type="GO" id="GO:0010332">
    <property type="term" value="P:response to gamma radiation"/>
    <property type="evidence" value="ECO:0007669"/>
    <property type="project" value="Ensembl"/>
</dbReference>
<dbReference type="GO" id="GO:0006641">
    <property type="term" value="P:triglyceride metabolic process"/>
    <property type="evidence" value="ECO:0007669"/>
    <property type="project" value="Ensembl"/>
</dbReference>
<dbReference type="CDD" id="cd01283">
    <property type="entry name" value="cytidine_deaminase"/>
    <property type="match status" value="1"/>
</dbReference>
<dbReference type="FunFam" id="3.40.140.10:FF:000049">
    <property type="entry name" value="C-&gt;U-editing enzyme APOBEC-1 isoform X2"/>
    <property type="match status" value="1"/>
</dbReference>
<dbReference type="Gene3D" id="3.40.140.10">
    <property type="entry name" value="Cytidine Deaminase, domain 2"/>
    <property type="match status" value="1"/>
</dbReference>
<dbReference type="InterPro" id="IPR016192">
    <property type="entry name" value="APOBEC/CMP_deaminase_Zn-bd"/>
</dbReference>
<dbReference type="InterPro" id="IPR041547">
    <property type="entry name" value="APOBEC1"/>
</dbReference>
<dbReference type="InterPro" id="IPR050610">
    <property type="entry name" value="APOBEC_Cyt_Deaminase"/>
</dbReference>
<dbReference type="InterPro" id="IPR002125">
    <property type="entry name" value="CMP_dCMP_dom"/>
</dbReference>
<dbReference type="InterPro" id="IPR016193">
    <property type="entry name" value="Cytidine_deaminase-like"/>
</dbReference>
<dbReference type="PANTHER" id="PTHR13857:SF26">
    <property type="entry name" value="C-U-EDITING ENZYME APOBEC-1"/>
    <property type="match status" value="1"/>
</dbReference>
<dbReference type="PANTHER" id="PTHR13857">
    <property type="entry name" value="MRNA EDITING ENZYME"/>
    <property type="match status" value="1"/>
</dbReference>
<dbReference type="Pfam" id="PF18774">
    <property type="entry name" value="APOBEC4_like"/>
    <property type="match status" value="1"/>
</dbReference>
<dbReference type="SUPFAM" id="SSF53927">
    <property type="entry name" value="Cytidine deaminase-like"/>
    <property type="match status" value="1"/>
</dbReference>
<dbReference type="PROSITE" id="PS00903">
    <property type="entry name" value="CYT_DCMP_DEAMINASES_1"/>
    <property type="match status" value="1"/>
</dbReference>
<dbReference type="PROSITE" id="PS51747">
    <property type="entry name" value="CYT_DCMP_DEAMINASES_2"/>
    <property type="match status" value="1"/>
</dbReference>
<sequence length="235" mass="28062">MNSKTGPSVGDATLRRRIKPWEFVAFFNPQELRKETCLLYEIKWGNQNIWRHSNQNTSQHAEINFMEKFTAERHFNSSVRCSITWFLSWSPCWECSKAIRKFLDHYPNVTLAIFISRLYWHMDQQHRQGLKELVHSGVTIQIMSYSEYHYCWRNFVDYPQGEEDYWPKYPYLWIMLYVLELHCIILGLPPCLKISGSHSNQLALFSLDLQDCHYQKIPYNVLVATGLVQPFVTWR</sequence>